<sequence>MNTGGRLIAGSHNRNEFVLINADESARIRSVEELSGQTCQICGDEIELSVDGESFVACNECAFPVCRPCYEYERREGNQSCPQCKTRYKRIKGSPRVEGDEEDDGIDDLDFEFDYSRSGLESETFSRRNSEFDLASAPPGSQIPLLTYGEEDVEISSDSHALIVSPSPGHIHRVHQPHFPDPAAHPRPMVPQKDLAVYGYGSVAWKDRMEEWKRKQNEKYQVVKHDGDSSLGDGDDADIPMMDEGRQPLSRKVPIKSSKINPYRMLIVLRLVILGLFFHYRILHPVNDAYALWLISVICEIWFAVSWVLDQFPKWYPIERETYLDRLSLRYEKEGKPSELAGVDVFVSTVDPMKEPPLITANTVLSILAVDYPVDRVACYVSDDGAAMLTFEALSETAEFARKWVPFCKKYTIEPRAPEWYFCHKMDYLKNKVHPAFVRERRAMKRDYEEFKVKINALVATAQKVPEEGWTMQDGTPWPGNNVRDHPGMIQVFLGNNGVRDVENNELPRLVYVSREKRPGFDHHKKAGAMNSLIRVSGVLSNAPYLLNVDCDHYINNSKALREAMCFMMDPQSGKKICYVQFPQRFDGIDKSDRYSNRNVVFFDINMKGLDGLQGPIYVGTGCVFRRQALYGFDAPKKKKTKRMTCNCWPKWCLFCCGLRKNRKSKTTDKKKKNREASKQIHALENIEEGTKGTNDAAKSPEAAQLKLEKKFGQSPVFVASAGMENGGLARNASPASLLREAIQVISCGYEDKTEWGKEIGWIYGSVTEDILTGFKMHSHGWRSVYCTPKIPAFKGSAPINLSDRLHQVLRWALGSVEIFLSRHCPIWYGYGGGLKWLERLSYINSVVYPWTSIPLLVYCSLPAICLLTGKFIVPEISNYASILFMALFGSIAVTGILEMQWGKVGIDDWWRNEQFWVIGGVSAHLFALFQGLLKVLAGVETNFTVTSKAADDGEFSELYIFKWTSLLIPPTTLLIINVIGVIVGISDAISNGYDSWGPLFGRLFFAFWVILHLYPFLKGLLGKQDRMPTIILVWSILLASILTLLWVRVNPFVAKGGPILEICGLDCL</sequence>
<evidence type="ECO:0000250" key="1">
    <source>
        <dbReference type="UniProtKB" id="O48946"/>
    </source>
</evidence>
<evidence type="ECO:0000250" key="2">
    <source>
        <dbReference type="UniProtKB" id="Q941L0"/>
    </source>
</evidence>
<evidence type="ECO:0000250" key="3">
    <source>
        <dbReference type="UniProtKB" id="Q9SWW6"/>
    </source>
</evidence>
<evidence type="ECO:0000255" key="4"/>
<evidence type="ECO:0000255" key="5">
    <source>
        <dbReference type="PROSITE-ProRule" id="PRU00175"/>
    </source>
</evidence>
<evidence type="ECO:0000255" key="6">
    <source>
        <dbReference type="PROSITE-ProRule" id="PRU00498"/>
    </source>
</evidence>
<evidence type="ECO:0000269" key="7">
    <source>
    </source>
</evidence>
<evidence type="ECO:0000269" key="8">
    <source>
    </source>
</evidence>
<evidence type="ECO:0000269" key="9">
    <source>
    </source>
</evidence>
<evidence type="ECO:0000303" key="10">
    <source>
    </source>
</evidence>
<evidence type="ECO:0000305" key="11"/>
<evidence type="ECO:0000312" key="12">
    <source>
        <dbReference type="Araport" id="AT5G09870"/>
    </source>
</evidence>
<evidence type="ECO:0000312" key="13">
    <source>
        <dbReference type="EMBL" id="BAB09408.1"/>
    </source>
</evidence>
<evidence type="ECO:0007744" key="14">
    <source>
    </source>
</evidence>
<evidence type="ECO:0007744" key="15">
    <source>
    </source>
</evidence>
<feature type="chain" id="PRO_0000166371" description="Cellulose synthase A catalytic subunit 5 [UDP-forming]">
    <location>
        <begin position="1"/>
        <end position="1069"/>
    </location>
</feature>
<feature type="topological domain" description="Cytoplasmic" evidence="4">
    <location>
        <begin position="1"/>
        <end position="265"/>
    </location>
</feature>
<feature type="transmembrane region" description="Helical" evidence="4">
    <location>
        <begin position="266"/>
        <end position="286"/>
    </location>
</feature>
<feature type="topological domain" description="Extracellular" evidence="4">
    <location>
        <begin position="287"/>
        <end position="288"/>
    </location>
</feature>
<feature type="transmembrane region" description="Helical" evidence="4">
    <location>
        <begin position="289"/>
        <end position="309"/>
    </location>
</feature>
<feature type="topological domain" description="Cytoplasmic" evidence="4">
    <location>
        <begin position="310"/>
        <end position="853"/>
    </location>
</feature>
<feature type="transmembrane region" description="Helical" evidence="4">
    <location>
        <begin position="854"/>
        <end position="874"/>
    </location>
</feature>
<feature type="topological domain" description="Extracellular" evidence="4">
    <location>
        <begin position="875"/>
        <end position="879"/>
    </location>
</feature>
<feature type="transmembrane region" description="Helical" evidence="4">
    <location>
        <begin position="880"/>
        <end position="900"/>
    </location>
</feature>
<feature type="topological domain" description="Cytoplasmic" evidence="4">
    <location>
        <begin position="901"/>
        <end position="915"/>
    </location>
</feature>
<feature type="transmembrane region" description="Helical" evidence="4">
    <location>
        <begin position="916"/>
        <end position="936"/>
    </location>
</feature>
<feature type="topological domain" description="Extracellular" evidence="4">
    <location>
        <begin position="937"/>
        <end position="965"/>
    </location>
</feature>
<feature type="transmembrane region" description="Helical" evidence="4">
    <location>
        <begin position="966"/>
        <end position="986"/>
    </location>
</feature>
<feature type="topological domain" description="Cytoplasmic" evidence="4">
    <location>
        <begin position="987"/>
        <end position="997"/>
    </location>
</feature>
<feature type="transmembrane region" description="Helical" evidence="4">
    <location>
        <begin position="998"/>
        <end position="1018"/>
    </location>
</feature>
<feature type="topological domain" description="Extracellular" evidence="4">
    <location>
        <begin position="1019"/>
        <end position="1027"/>
    </location>
</feature>
<feature type="transmembrane region" description="Helical" evidence="4">
    <location>
        <begin position="1028"/>
        <end position="1048"/>
    </location>
</feature>
<feature type="topological domain" description="Cytoplasmic" evidence="4">
    <location>
        <begin position="1049"/>
        <end position="1069"/>
    </location>
</feature>
<feature type="zinc finger region" description="RING-type; degenerate" evidence="5">
    <location>
        <begin position="39"/>
        <end position="85"/>
    </location>
</feature>
<feature type="coiled-coil region" evidence="4">
    <location>
        <begin position="438"/>
        <end position="464"/>
    </location>
</feature>
<feature type="active site" evidence="4">
    <location>
        <position position="384"/>
    </location>
</feature>
<feature type="active site" evidence="4">
    <location>
        <position position="770"/>
    </location>
</feature>
<feature type="binding site" evidence="3">
    <location>
        <position position="39"/>
    </location>
    <ligand>
        <name>Zn(2+)</name>
        <dbReference type="ChEBI" id="CHEBI:29105"/>
        <label>1</label>
    </ligand>
</feature>
<feature type="binding site" evidence="3">
    <location>
        <position position="42"/>
    </location>
    <ligand>
        <name>Zn(2+)</name>
        <dbReference type="ChEBI" id="CHEBI:29105"/>
        <label>1</label>
    </ligand>
</feature>
<feature type="binding site" evidence="3">
    <location>
        <position position="58"/>
    </location>
    <ligand>
        <name>Zn(2+)</name>
        <dbReference type="ChEBI" id="CHEBI:29105"/>
        <label>2</label>
    </ligand>
</feature>
<feature type="binding site" evidence="3">
    <location>
        <position position="61"/>
    </location>
    <ligand>
        <name>Zn(2+)</name>
        <dbReference type="ChEBI" id="CHEBI:29105"/>
        <label>2</label>
    </ligand>
</feature>
<feature type="binding site" evidence="3">
    <location>
        <position position="66"/>
    </location>
    <ligand>
        <name>Zn(2+)</name>
        <dbReference type="ChEBI" id="CHEBI:29105"/>
        <label>1</label>
    </ligand>
</feature>
<feature type="binding site" evidence="3">
    <location>
        <position position="69"/>
    </location>
    <ligand>
        <name>Zn(2+)</name>
        <dbReference type="ChEBI" id="CHEBI:29105"/>
        <label>1</label>
    </ligand>
</feature>
<feature type="binding site" evidence="3">
    <location>
        <position position="81"/>
    </location>
    <ligand>
        <name>Zn(2+)</name>
        <dbReference type="ChEBI" id="CHEBI:29105"/>
        <label>2</label>
    </ligand>
</feature>
<feature type="binding site" evidence="3">
    <location>
        <position position="84"/>
    </location>
    <ligand>
        <name>Zn(2+)</name>
        <dbReference type="ChEBI" id="CHEBI:29105"/>
        <label>2</label>
    </ligand>
</feature>
<feature type="binding site" evidence="2">
    <location>
        <position position="348"/>
    </location>
    <ligand>
        <name>UDP-alpha-D-glucose</name>
        <dbReference type="ChEBI" id="CHEBI:58885"/>
    </ligand>
</feature>
<feature type="binding site" evidence="2">
    <location>
        <position position="354"/>
    </location>
    <ligand>
        <name>UDP-alpha-D-glucose</name>
        <dbReference type="ChEBI" id="CHEBI:58885"/>
    </ligand>
</feature>
<feature type="binding site" evidence="2">
    <location>
        <position position="355"/>
    </location>
    <ligand>
        <name>UDP-alpha-D-glucose</name>
        <dbReference type="ChEBI" id="CHEBI:58885"/>
    </ligand>
</feature>
<feature type="binding site" evidence="2">
    <location>
        <position position="384"/>
    </location>
    <ligand>
        <name>UDP-alpha-D-glucose</name>
        <dbReference type="ChEBI" id="CHEBI:58885"/>
    </ligand>
</feature>
<feature type="binding site" evidence="2">
    <location>
        <position position="525"/>
    </location>
    <ligand>
        <name>UDP-alpha-D-glucose</name>
        <dbReference type="ChEBI" id="CHEBI:58885"/>
    </ligand>
</feature>
<feature type="binding site" evidence="2">
    <location>
        <position position="526"/>
    </location>
    <ligand>
        <name>Mn(2+)</name>
        <dbReference type="ChEBI" id="CHEBI:29035"/>
    </ligand>
</feature>
<feature type="binding site" evidence="2">
    <location>
        <position position="550"/>
    </location>
    <ligand>
        <name>Mn(2+)</name>
        <dbReference type="ChEBI" id="CHEBI:29035"/>
    </ligand>
</feature>
<feature type="modified residue" description="N-acetylmethionine" evidence="1">
    <location>
        <position position="1"/>
    </location>
</feature>
<feature type="modified residue" description="Phosphoserine" evidence="8 14 15">
    <location>
        <position position="229"/>
    </location>
</feature>
<feature type="modified residue" description="Phosphoserine" evidence="8 14 15">
    <location>
        <position position="230"/>
    </location>
</feature>
<feature type="glycosylation site" description="N-linked (GlcNAc...) asparagine" evidence="6">
    <location>
        <position position="943"/>
    </location>
</feature>
<reference key="1">
    <citation type="journal article" date="1998" name="DNA Res.">
        <title>Structural analysis of Arabidopsis thaliana chromosome 5. VIII. Sequence features of the regions of 1,081,958 bp covered by seventeen physically assigned P1 and TAC clones.</title>
        <authorList>
            <person name="Asamizu E."/>
            <person name="Sato S."/>
            <person name="Kaneko T."/>
            <person name="Nakamura Y."/>
            <person name="Kotani H."/>
            <person name="Miyajima N."/>
            <person name="Tabata S."/>
        </authorList>
    </citation>
    <scope>NUCLEOTIDE SEQUENCE [LARGE SCALE GENOMIC DNA]</scope>
    <source>
        <strain>cv. Columbia</strain>
    </source>
</reference>
<reference key="2">
    <citation type="journal article" date="2017" name="Plant J.">
        <title>Araport11: a complete reannotation of the Arabidopsis thaliana reference genome.</title>
        <authorList>
            <person name="Cheng C.Y."/>
            <person name="Krishnakumar V."/>
            <person name="Chan A.P."/>
            <person name="Thibaud-Nissen F."/>
            <person name="Schobel S."/>
            <person name="Town C.D."/>
        </authorList>
    </citation>
    <scope>GENOME REANNOTATION</scope>
    <source>
        <strain>cv. Columbia</strain>
    </source>
</reference>
<reference key="3">
    <citation type="journal article" date="2003" name="Science">
        <title>Empirical analysis of transcriptional activity in the Arabidopsis genome.</title>
        <authorList>
            <person name="Yamada K."/>
            <person name="Lim J."/>
            <person name="Dale J.M."/>
            <person name="Chen H."/>
            <person name="Shinn P."/>
            <person name="Palm C.J."/>
            <person name="Southwick A.M."/>
            <person name="Wu H.C."/>
            <person name="Kim C.J."/>
            <person name="Nguyen M."/>
            <person name="Pham P.K."/>
            <person name="Cheuk R.F."/>
            <person name="Karlin-Newmann G."/>
            <person name="Liu S.X."/>
            <person name="Lam B."/>
            <person name="Sakano H."/>
            <person name="Wu T."/>
            <person name="Yu G."/>
            <person name="Miranda M."/>
            <person name="Quach H.L."/>
            <person name="Tripp M."/>
            <person name="Chang C.H."/>
            <person name="Lee J.M."/>
            <person name="Toriumi M.J."/>
            <person name="Chan M.M."/>
            <person name="Tang C.C."/>
            <person name="Onodera C.S."/>
            <person name="Deng J.M."/>
            <person name="Akiyama K."/>
            <person name="Ansari Y."/>
            <person name="Arakawa T."/>
            <person name="Banh J."/>
            <person name="Banno F."/>
            <person name="Bowser L."/>
            <person name="Brooks S.Y."/>
            <person name="Carninci P."/>
            <person name="Chao Q."/>
            <person name="Choy N."/>
            <person name="Enju A."/>
            <person name="Goldsmith A.D."/>
            <person name="Gurjal M."/>
            <person name="Hansen N.F."/>
            <person name="Hayashizaki Y."/>
            <person name="Johnson-Hopson C."/>
            <person name="Hsuan V.W."/>
            <person name="Iida K."/>
            <person name="Karnes M."/>
            <person name="Khan S."/>
            <person name="Koesema E."/>
            <person name="Ishida J."/>
            <person name="Jiang P.X."/>
            <person name="Jones T."/>
            <person name="Kawai J."/>
            <person name="Kamiya A."/>
            <person name="Meyers C."/>
            <person name="Nakajima M."/>
            <person name="Narusaka M."/>
            <person name="Seki M."/>
            <person name="Sakurai T."/>
            <person name="Satou M."/>
            <person name="Tamse R."/>
            <person name="Vaysberg M."/>
            <person name="Wallender E.K."/>
            <person name="Wong C."/>
            <person name="Yamamura Y."/>
            <person name="Yuan S."/>
            <person name="Shinozaki K."/>
            <person name="Davis R.W."/>
            <person name="Theologis A."/>
            <person name="Ecker J.R."/>
        </authorList>
    </citation>
    <scope>NUCLEOTIDE SEQUENCE [LARGE SCALE MRNA] OF 671-1069</scope>
    <source>
        <strain>cv. Columbia</strain>
    </source>
</reference>
<reference key="4">
    <citation type="journal article" date="2000" name="Genome Biol.">
        <title>Higher plant cellulose synthases.</title>
        <authorList>
            <person name="Richmond T."/>
        </authorList>
    </citation>
    <scope>GENE FAMILY</scope>
    <scope>NOMENCLATURE</scope>
</reference>
<reference key="5">
    <citation type="journal article" date="2002" name="Plant Physiol.">
        <title>Genetic complexity of cellulose synthase A gene function in Arabidopsis embryogenesis.</title>
        <authorList>
            <person name="Beeckman T."/>
            <person name="Przemeck G.K.H."/>
            <person name="Stamatiou G."/>
            <person name="Lau R."/>
            <person name="Terryn N."/>
            <person name="De Rycke R."/>
            <person name="Inze D."/>
            <person name="Berleth T."/>
        </authorList>
    </citation>
    <scope>TISSUE SPECIFICITY</scope>
    <scope>DEVELOPMENTAL STAGE</scope>
</reference>
<reference key="6">
    <citation type="journal article" date="2003" name="Mol. Cell. Proteomics">
        <title>Large-scale analysis of in vivo phosphorylated membrane proteins by immobilized metal ion affinity chromatography and mass spectrometry.</title>
        <authorList>
            <person name="Nuehse T.S."/>
            <person name="Stensballe A."/>
            <person name="Jensen O.N."/>
            <person name="Peck S.C."/>
        </authorList>
    </citation>
    <scope>PHOSPHORYLATION [LARGE SCALE ANALYSIS] AT SER-229 AND SER-230</scope>
    <scope>IDENTIFICATION BY MASS SPECTROMETRY [LARGE SCALE ANALYSIS]</scope>
    <source>
        <strain>cv. La-0</strain>
    </source>
</reference>
<reference key="7">
    <citation type="journal article" date="2004" name="Plant Cell">
        <title>Phosphoproteomics of the Arabidopsis plasma membrane and a new phosphorylation site database.</title>
        <authorList>
            <person name="Nuehse T.S."/>
            <person name="Stensballe A."/>
            <person name="Jensen O.N."/>
            <person name="Peck S.C."/>
        </authorList>
    </citation>
    <scope>PHOSPHORYLATION [LARGE SCALE ANALYSIS] AT SER-229 AND SER-230</scope>
    <scope>IDENTIFICATION BY MASS SPECTROMETRY [LARGE SCALE ANALYSIS]</scope>
</reference>
<reference key="8">
    <citation type="journal article" date="2007" name="Plant Mol. Biol.">
        <title>Identification of cellulose synthase AtCesA7 (IRX3) in vivo phosphorylation sites -- a potential role in regulating protein degradation.</title>
        <authorList>
            <person name="Taylor N.G."/>
        </authorList>
    </citation>
    <scope>PHOSPHORYLATION AT SER-229 AND SER-230</scope>
    <scope>IDENTIFICATION BY MASS SPECTROMETRY</scope>
</reference>
<reference key="9">
    <citation type="journal article" date="2007" name="Proc. Natl. Acad. Sci. U.S.A.">
        <title>Organization of cellulose synthase complexes involved in primary cell wall synthesis in Arabidopsis thaliana.</title>
        <authorList>
            <person name="Desprez T."/>
            <person name="Juraniec M."/>
            <person name="Crowell E.F."/>
            <person name="Jouy H."/>
            <person name="Pochylova Z."/>
            <person name="Parcy F."/>
            <person name="Hoefte H."/>
            <person name="Gonneau M."/>
            <person name="Vernhettes S."/>
        </authorList>
    </citation>
    <scope>FUNCTION</scope>
</reference>
<gene>
    <name evidence="10" type="primary">CESA5</name>
    <name evidence="12" type="ordered locus">At5g09870</name>
    <name evidence="13" type="ORF">MYH9.8</name>
</gene>
<dbReference type="EC" id="2.4.1.12" evidence="11"/>
<dbReference type="EMBL" id="AB016893">
    <property type="protein sequence ID" value="BAB09408.1"/>
    <property type="molecule type" value="Genomic_DNA"/>
</dbReference>
<dbReference type="EMBL" id="CP002688">
    <property type="protein sequence ID" value="AED91458.1"/>
    <property type="molecule type" value="Genomic_DNA"/>
</dbReference>
<dbReference type="EMBL" id="AY136423">
    <property type="protein sequence ID" value="AAM97089.1"/>
    <property type="status" value="ALT_INIT"/>
    <property type="molecule type" value="mRNA"/>
</dbReference>
<dbReference type="EMBL" id="BT008832">
    <property type="protein sequence ID" value="AAP68271.1"/>
    <property type="status" value="ALT_INIT"/>
    <property type="molecule type" value="mRNA"/>
</dbReference>
<dbReference type="RefSeq" id="NP_196549.1">
    <property type="nucleotide sequence ID" value="NM_121024.3"/>
</dbReference>
<dbReference type="SMR" id="Q8L778"/>
<dbReference type="BioGRID" id="16125">
    <property type="interactions" value="1"/>
</dbReference>
<dbReference type="FunCoup" id="Q8L778">
    <property type="interactions" value="10"/>
</dbReference>
<dbReference type="STRING" id="3702.Q8L778"/>
<dbReference type="CAZy" id="GT2">
    <property type="family name" value="Glycosyltransferase Family 2"/>
</dbReference>
<dbReference type="GlyCosmos" id="Q8L778">
    <property type="glycosylation" value="1 site, No reported glycans"/>
</dbReference>
<dbReference type="GlyGen" id="Q8L778">
    <property type="glycosylation" value="1 site"/>
</dbReference>
<dbReference type="iPTMnet" id="Q8L778"/>
<dbReference type="PaxDb" id="3702-AT5G09870.1"/>
<dbReference type="ProteomicsDB" id="220388"/>
<dbReference type="EnsemblPlants" id="AT5G09870.1">
    <property type="protein sequence ID" value="AT5G09870.1"/>
    <property type="gene ID" value="AT5G09870"/>
</dbReference>
<dbReference type="GeneID" id="830847"/>
<dbReference type="Gramene" id="AT5G09870.1">
    <property type="protein sequence ID" value="AT5G09870.1"/>
    <property type="gene ID" value="AT5G09870"/>
</dbReference>
<dbReference type="KEGG" id="ath:AT5G09870"/>
<dbReference type="Araport" id="AT5G09870"/>
<dbReference type="TAIR" id="AT5G09870">
    <property type="gene designation" value="CESA5"/>
</dbReference>
<dbReference type="eggNOG" id="ENOG502QQGG">
    <property type="taxonomic scope" value="Eukaryota"/>
</dbReference>
<dbReference type="HOGENOM" id="CLU_001418_0_0_1"/>
<dbReference type="InParanoid" id="Q8L778"/>
<dbReference type="OMA" id="VYCIPKL"/>
<dbReference type="PhylomeDB" id="Q8L778"/>
<dbReference type="BioCyc" id="ARA:AT5G09870-MONOMER"/>
<dbReference type="UniPathway" id="UPA00695"/>
<dbReference type="PRO" id="PR:Q8L778"/>
<dbReference type="Proteomes" id="UP000006548">
    <property type="component" value="Chromosome 5"/>
</dbReference>
<dbReference type="ExpressionAtlas" id="Q8L778">
    <property type="expression patterns" value="baseline and differential"/>
</dbReference>
<dbReference type="GO" id="GO:0005886">
    <property type="term" value="C:plasma membrane"/>
    <property type="evidence" value="ECO:0007005"/>
    <property type="project" value="TAIR"/>
</dbReference>
<dbReference type="GO" id="GO:0016760">
    <property type="term" value="F:cellulose synthase (UDP-forming) activity"/>
    <property type="evidence" value="ECO:0007669"/>
    <property type="project" value="UniProtKB-EC"/>
</dbReference>
<dbReference type="GO" id="GO:0008270">
    <property type="term" value="F:zinc ion binding"/>
    <property type="evidence" value="ECO:0007669"/>
    <property type="project" value="UniProtKB-KW"/>
</dbReference>
<dbReference type="GO" id="GO:0071555">
    <property type="term" value="P:cell wall organization"/>
    <property type="evidence" value="ECO:0007669"/>
    <property type="project" value="UniProtKB-KW"/>
</dbReference>
<dbReference type="GO" id="GO:0030244">
    <property type="term" value="P:cellulose biosynthetic process"/>
    <property type="evidence" value="ECO:0000315"/>
    <property type="project" value="TAIR"/>
</dbReference>
<dbReference type="GO" id="GO:0010192">
    <property type="term" value="P:mucilage biosynthetic process"/>
    <property type="evidence" value="ECO:0000315"/>
    <property type="project" value="TAIR"/>
</dbReference>
<dbReference type="GO" id="GO:0009833">
    <property type="term" value="P:plant-type primary cell wall biogenesis"/>
    <property type="evidence" value="ECO:0000250"/>
    <property type="project" value="CACAO"/>
</dbReference>
<dbReference type="CDD" id="cd16617">
    <property type="entry name" value="mRING-HC-C4C4_CesA"/>
    <property type="match status" value="1"/>
</dbReference>
<dbReference type="FunFam" id="3.30.40.10:FF:000031">
    <property type="entry name" value="Cellulose synthase"/>
    <property type="match status" value="1"/>
</dbReference>
<dbReference type="FunFam" id="3.90.550.10:FF:000009">
    <property type="entry name" value="Cellulose synthase"/>
    <property type="match status" value="1"/>
</dbReference>
<dbReference type="Gene3D" id="3.90.550.10">
    <property type="entry name" value="Spore Coat Polysaccharide Biosynthesis Protein SpsA, Chain A"/>
    <property type="match status" value="1"/>
</dbReference>
<dbReference type="Gene3D" id="3.30.40.10">
    <property type="entry name" value="Zinc/RING finger domain, C3HC4 (zinc finger)"/>
    <property type="match status" value="1"/>
</dbReference>
<dbReference type="InterPro" id="IPR005150">
    <property type="entry name" value="Cellulose_synth"/>
</dbReference>
<dbReference type="InterPro" id="IPR027934">
    <property type="entry name" value="CES_Znf_RING"/>
</dbReference>
<dbReference type="InterPro" id="IPR029044">
    <property type="entry name" value="Nucleotide-diphossugar_trans"/>
</dbReference>
<dbReference type="InterPro" id="IPR001841">
    <property type="entry name" value="Znf_RING"/>
</dbReference>
<dbReference type="InterPro" id="IPR013083">
    <property type="entry name" value="Znf_RING/FYVE/PHD"/>
</dbReference>
<dbReference type="PANTHER" id="PTHR13301">
    <property type="entry name" value="X-BOX TRANSCRIPTION FACTOR-RELATED"/>
    <property type="match status" value="1"/>
</dbReference>
<dbReference type="Pfam" id="PF03552">
    <property type="entry name" value="Cellulose_synt"/>
    <property type="match status" value="1"/>
</dbReference>
<dbReference type="Pfam" id="PF14569">
    <property type="entry name" value="zf-UDP"/>
    <property type="match status" value="1"/>
</dbReference>
<dbReference type="SUPFAM" id="SSF53448">
    <property type="entry name" value="Nucleotide-diphospho-sugar transferases"/>
    <property type="match status" value="1"/>
</dbReference>
<dbReference type="SUPFAM" id="SSF57850">
    <property type="entry name" value="RING/U-box"/>
    <property type="match status" value="1"/>
</dbReference>
<dbReference type="PROSITE" id="PS50089">
    <property type="entry name" value="ZF_RING_2"/>
    <property type="match status" value="1"/>
</dbReference>
<name>CESA5_ARATH</name>
<keyword id="KW-0007">Acetylation</keyword>
<keyword id="KW-1003">Cell membrane</keyword>
<keyword id="KW-0961">Cell wall biogenesis/degradation</keyword>
<keyword id="KW-0135">Cellulose biosynthesis</keyword>
<keyword id="KW-0175">Coiled coil</keyword>
<keyword id="KW-0325">Glycoprotein</keyword>
<keyword id="KW-0328">Glycosyltransferase</keyword>
<keyword id="KW-0464">Manganese</keyword>
<keyword id="KW-0472">Membrane</keyword>
<keyword id="KW-0479">Metal-binding</keyword>
<keyword id="KW-0597">Phosphoprotein</keyword>
<keyword id="KW-1185">Reference proteome</keyword>
<keyword id="KW-0808">Transferase</keyword>
<keyword id="KW-0812">Transmembrane</keyword>
<keyword id="KW-1133">Transmembrane helix</keyword>
<keyword id="KW-0862">Zinc</keyword>
<keyword id="KW-0863">Zinc-finger</keyword>
<comment type="function">
    <text evidence="3 9">Catalytic subunit of cellulose synthase terminal complexes ('rosettes'), required for beta-1,4-glucan microfibril crystallization, a major mechanism of the cell wall formation.</text>
</comment>
<comment type="catalytic activity">
    <reaction evidence="11">
        <text>[(1-&gt;4)-beta-D-glucosyl](n) + UDP-alpha-D-glucose = [(1-&gt;4)-beta-D-glucosyl](n+1) + UDP + H(+)</text>
        <dbReference type="Rhea" id="RHEA:19929"/>
        <dbReference type="Rhea" id="RHEA-COMP:10033"/>
        <dbReference type="Rhea" id="RHEA-COMP:10034"/>
        <dbReference type="ChEBI" id="CHEBI:15378"/>
        <dbReference type="ChEBI" id="CHEBI:18246"/>
        <dbReference type="ChEBI" id="CHEBI:58223"/>
        <dbReference type="ChEBI" id="CHEBI:58885"/>
        <dbReference type="EC" id="2.4.1.12"/>
    </reaction>
</comment>
<comment type="cofactor">
    <cofactor evidence="3">
        <name>Zn(2+)</name>
        <dbReference type="ChEBI" id="CHEBI:29105"/>
    </cofactor>
    <text evidence="3">Binds 2 Zn(2+) ions per subunit.</text>
</comment>
<comment type="cofactor">
    <cofactor evidence="2">
        <name>Mn(2+)</name>
        <dbReference type="ChEBI" id="CHEBI:29035"/>
    </cofactor>
</comment>
<comment type="pathway">
    <text>Glycan metabolism; plant cellulose biosynthesis.</text>
</comment>
<comment type="subcellular location">
    <subcellularLocation>
        <location evidence="11">Cell membrane</location>
        <topology evidence="11">Multi-pass membrane protein</topology>
    </subcellularLocation>
</comment>
<comment type="tissue specificity">
    <text evidence="7">Expressed in young plants, stems and flowers.</text>
</comment>
<comment type="developmental stage">
    <text evidence="7">Expressed at low levels in embryos.</text>
</comment>
<comment type="miscellaneous">
    <text>Partially redundant with CESA6.</text>
</comment>
<comment type="similarity">
    <text evidence="11">Belongs to the glycosyltransferase 2 family. Plant cellulose synthase subfamily.</text>
</comment>
<comment type="sequence caution" evidence="11">
    <conflict type="erroneous initiation">
        <sequence resource="EMBL-CDS" id="AAM97089"/>
    </conflict>
</comment>
<comment type="sequence caution" evidence="11">
    <conflict type="erroneous initiation">
        <sequence resource="EMBL-CDS" id="AAP68271"/>
    </conflict>
</comment>
<protein>
    <recommendedName>
        <fullName evidence="10">Cellulose synthase A catalytic subunit 5 [UDP-forming]</fullName>
        <shortName evidence="10">AtCesA5</shortName>
        <ecNumber evidence="11">2.4.1.12</ecNumber>
    </recommendedName>
</protein>
<proteinExistence type="evidence at protein level"/>
<organism>
    <name type="scientific">Arabidopsis thaliana</name>
    <name type="common">Mouse-ear cress</name>
    <dbReference type="NCBI Taxonomy" id="3702"/>
    <lineage>
        <taxon>Eukaryota</taxon>
        <taxon>Viridiplantae</taxon>
        <taxon>Streptophyta</taxon>
        <taxon>Embryophyta</taxon>
        <taxon>Tracheophyta</taxon>
        <taxon>Spermatophyta</taxon>
        <taxon>Magnoliopsida</taxon>
        <taxon>eudicotyledons</taxon>
        <taxon>Gunneridae</taxon>
        <taxon>Pentapetalae</taxon>
        <taxon>rosids</taxon>
        <taxon>malvids</taxon>
        <taxon>Brassicales</taxon>
        <taxon>Brassicaceae</taxon>
        <taxon>Camelineae</taxon>
        <taxon>Arabidopsis</taxon>
    </lineage>
</organism>
<accession>Q8L778</accession>
<accession>Q9FIB9</accession>